<reference key="1">
    <citation type="submission" date="2006-11" db="EMBL/GenBank/DDBJ databases">
        <title>Sequence of Campylobacter fetus subsp. fetus 82-40.</title>
        <authorList>
            <person name="Fouts D.E."/>
            <person name="Nelson K.E."/>
        </authorList>
    </citation>
    <scope>NUCLEOTIDE SEQUENCE [LARGE SCALE GENOMIC DNA]</scope>
    <source>
        <strain>82-40</strain>
    </source>
</reference>
<sequence length="335" mass="36645">MILGIESSCDDSSIALMDIDNFELKKYKKITQENEHSKFGGVVPELAARLHTAAIPNLIEDVKEFFTSIKAVAVTNEPGLSVSLISGVSAARALSLALGIPLIGVNHLIGHIYSLFLDKNVVLPLGVLLVSGGHTMVLNIDESGYIKLIATTSDDSFGESFDKVAKMMDLGYPGGAIIEKLALSGDKNRFNFTVPLKHDKRLEYSFSGLKNQVRTQISKFESLSLQDKSDIASSFQYTAISHITDKLEKIFSEYKFKNFGAIGGGSANQVLRSNLEQICEKFGSNLMFAPLKFCSDNAAMIARAGVCKYKNKCFTKPLDMSINPRCKLDGANLYF</sequence>
<feature type="chain" id="PRO_0000303309" description="tRNA N6-adenosine threonylcarbamoyltransferase">
    <location>
        <begin position="1"/>
        <end position="335"/>
    </location>
</feature>
<feature type="binding site" evidence="1">
    <location>
        <position position="107"/>
    </location>
    <ligand>
        <name>Fe cation</name>
        <dbReference type="ChEBI" id="CHEBI:24875"/>
    </ligand>
</feature>
<feature type="binding site" evidence="1">
    <location>
        <position position="111"/>
    </location>
    <ligand>
        <name>Fe cation</name>
        <dbReference type="ChEBI" id="CHEBI:24875"/>
    </ligand>
</feature>
<feature type="binding site" evidence="1">
    <location>
        <begin position="129"/>
        <end position="133"/>
    </location>
    <ligand>
        <name>substrate</name>
    </ligand>
</feature>
<feature type="binding site" evidence="1">
    <location>
        <position position="162"/>
    </location>
    <ligand>
        <name>substrate</name>
    </ligand>
</feature>
<feature type="binding site" evidence="1">
    <location>
        <position position="175"/>
    </location>
    <ligand>
        <name>substrate</name>
    </ligand>
</feature>
<feature type="binding site" evidence="1">
    <location>
        <position position="268"/>
    </location>
    <ligand>
        <name>substrate</name>
    </ligand>
</feature>
<feature type="binding site" evidence="1">
    <location>
        <position position="296"/>
    </location>
    <ligand>
        <name>Fe cation</name>
        <dbReference type="ChEBI" id="CHEBI:24875"/>
    </ligand>
</feature>
<evidence type="ECO:0000255" key="1">
    <source>
        <dbReference type="HAMAP-Rule" id="MF_01445"/>
    </source>
</evidence>
<protein>
    <recommendedName>
        <fullName evidence="1">tRNA N6-adenosine threonylcarbamoyltransferase</fullName>
        <ecNumber evidence="1">2.3.1.234</ecNumber>
    </recommendedName>
    <alternativeName>
        <fullName evidence="1">N6-L-threonylcarbamoyladenine synthase</fullName>
        <shortName evidence="1">t(6)A synthase</shortName>
    </alternativeName>
    <alternativeName>
        <fullName evidence="1">t(6)A37 threonylcarbamoyladenosine biosynthesis protein TsaD</fullName>
    </alternativeName>
    <alternativeName>
        <fullName evidence="1">tRNA threonylcarbamoyladenosine biosynthesis protein TsaD</fullName>
    </alternativeName>
</protein>
<proteinExistence type="inferred from homology"/>
<name>TSAD_CAMFF</name>
<organism>
    <name type="scientific">Campylobacter fetus subsp. fetus (strain 82-40)</name>
    <dbReference type="NCBI Taxonomy" id="360106"/>
    <lineage>
        <taxon>Bacteria</taxon>
        <taxon>Pseudomonadati</taxon>
        <taxon>Campylobacterota</taxon>
        <taxon>Epsilonproteobacteria</taxon>
        <taxon>Campylobacterales</taxon>
        <taxon>Campylobacteraceae</taxon>
        <taxon>Campylobacter</taxon>
    </lineage>
</organism>
<comment type="function">
    <text evidence="1">Required for the formation of a threonylcarbamoyl group on adenosine at position 37 (t(6)A37) in tRNAs that read codons beginning with adenine. Is involved in the transfer of the threonylcarbamoyl moiety of threonylcarbamoyl-AMP (TC-AMP) to the N6 group of A37, together with TsaE and TsaB. TsaD likely plays a direct catalytic role in this reaction.</text>
</comment>
<comment type="catalytic activity">
    <reaction evidence="1">
        <text>L-threonylcarbamoyladenylate + adenosine(37) in tRNA = N(6)-L-threonylcarbamoyladenosine(37) in tRNA + AMP + H(+)</text>
        <dbReference type="Rhea" id="RHEA:37059"/>
        <dbReference type="Rhea" id="RHEA-COMP:10162"/>
        <dbReference type="Rhea" id="RHEA-COMP:10163"/>
        <dbReference type="ChEBI" id="CHEBI:15378"/>
        <dbReference type="ChEBI" id="CHEBI:73682"/>
        <dbReference type="ChEBI" id="CHEBI:74411"/>
        <dbReference type="ChEBI" id="CHEBI:74418"/>
        <dbReference type="ChEBI" id="CHEBI:456215"/>
        <dbReference type="EC" id="2.3.1.234"/>
    </reaction>
</comment>
<comment type="cofactor">
    <cofactor evidence="1">
        <name>Fe(2+)</name>
        <dbReference type="ChEBI" id="CHEBI:29033"/>
    </cofactor>
    <text evidence="1">Binds 1 Fe(2+) ion per subunit.</text>
</comment>
<comment type="subcellular location">
    <subcellularLocation>
        <location evidence="1">Cytoplasm</location>
    </subcellularLocation>
</comment>
<comment type="similarity">
    <text evidence="1">Belongs to the KAE1 / TsaD family.</text>
</comment>
<gene>
    <name evidence="1" type="primary">tsaD</name>
    <name type="synonym">gcp</name>
    <name type="ordered locus">CFF8240_0215</name>
</gene>
<dbReference type="EC" id="2.3.1.234" evidence="1"/>
<dbReference type="EMBL" id="CP000487">
    <property type="protein sequence ID" value="ABK83384.1"/>
    <property type="molecule type" value="Genomic_DNA"/>
</dbReference>
<dbReference type="RefSeq" id="WP_010401903.1">
    <property type="nucleotide sequence ID" value="NC_008599.1"/>
</dbReference>
<dbReference type="SMR" id="A0RMI6"/>
<dbReference type="GeneID" id="61064059"/>
<dbReference type="KEGG" id="cff:CFF8240_0215"/>
<dbReference type="eggNOG" id="COG0533">
    <property type="taxonomic scope" value="Bacteria"/>
</dbReference>
<dbReference type="HOGENOM" id="CLU_023208_0_3_7"/>
<dbReference type="Proteomes" id="UP000000760">
    <property type="component" value="Chromosome"/>
</dbReference>
<dbReference type="GO" id="GO:0005737">
    <property type="term" value="C:cytoplasm"/>
    <property type="evidence" value="ECO:0007669"/>
    <property type="project" value="UniProtKB-SubCell"/>
</dbReference>
<dbReference type="GO" id="GO:0005506">
    <property type="term" value="F:iron ion binding"/>
    <property type="evidence" value="ECO:0007669"/>
    <property type="project" value="UniProtKB-UniRule"/>
</dbReference>
<dbReference type="GO" id="GO:0061711">
    <property type="term" value="F:N(6)-L-threonylcarbamoyladenine synthase activity"/>
    <property type="evidence" value="ECO:0007669"/>
    <property type="project" value="UniProtKB-EC"/>
</dbReference>
<dbReference type="GO" id="GO:0002949">
    <property type="term" value="P:tRNA threonylcarbamoyladenosine modification"/>
    <property type="evidence" value="ECO:0007669"/>
    <property type="project" value="UniProtKB-UniRule"/>
</dbReference>
<dbReference type="Gene3D" id="3.30.420.40">
    <property type="match status" value="2"/>
</dbReference>
<dbReference type="HAMAP" id="MF_01445">
    <property type="entry name" value="TsaD"/>
    <property type="match status" value="1"/>
</dbReference>
<dbReference type="InterPro" id="IPR043129">
    <property type="entry name" value="ATPase_NBD"/>
</dbReference>
<dbReference type="InterPro" id="IPR000905">
    <property type="entry name" value="Gcp-like_dom"/>
</dbReference>
<dbReference type="InterPro" id="IPR017861">
    <property type="entry name" value="KAE1/TsaD"/>
</dbReference>
<dbReference type="InterPro" id="IPR017860">
    <property type="entry name" value="Peptidase_M22_CS"/>
</dbReference>
<dbReference type="InterPro" id="IPR022450">
    <property type="entry name" value="TsaD"/>
</dbReference>
<dbReference type="NCBIfam" id="TIGR00329">
    <property type="entry name" value="gcp_kae1"/>
    <property type="match status" value="1"/>
</dbReference>
<dbReference type="NCBIfam" id="TIGR03723">
    <property type="entry name" value="T6A_TsaD_YgjD"/>
    <property type="match status" value="1"/>
</dbReference>
<dbReference type="PANTHER" id="PTHR11735">
    <property type="entry name" value="TRNA N6-ADENOSINE THREONYLCARBAMOYLTRANSFERASE"/>
    <property type="match status" value="1"/>
</dbReference>
<dbReference type="PANTHER" id="PTHR11735:SF6">
    <property type="entry name" value="TRNA N6-ADENOSINE THREONYLCARBAMOYLTRANSFERASE, MITOCHONDRIAL"/>
    <property type="match status" value="1"/>
</dbReference>
<dbReference type="Pfam" id="PF00814">
    <property type="entry name" value="TsaD"/>
    <property type="match status" value="1"/>
</dbReference>
<dbReference type="PRINTS" id="PR00789">
    <property type="entry name" value="OSIALOPTASE"/>
</dbReference>
<dbReference type="SUPFAM" id="SSF53067">
    <property type="entry name" value="Actin-like ATPase domain"/>
    <property type="match status" value="2"/>
</dbReference>
<dbReference type="PROSITE" id="PS01016">
    <property type="entry name" value="GLYCOPROTEASE"/>
    <property type="match status" value="1"/>
</dbReference>
<accession>A0RMI6</accession>
<keyword id="KW-0012">Acyltransferase</keyword>
<keyword id="KW-0963">Cytoplasm</keyword>
<keyword id="KW-0408">Iron</keyword>
<keyword id="KW-0479">Metal-binding</keyword>
<keyword id="KW-0808">Transferase</keyword>
<keyword id="KW-0819">tRNA processing</keyword>